<reference key="1">
    <citation type="journal article" date="2005" name="Nature">
        <title>The genome of the social amoeba Dictyostelium discoideum.</title>
        <authorList>
            <person name="Eichinger L."/>
            <person name="Pachebat J.A."/>
            <person name="Gloeckner G."/>
            <person name="Rajandream M.A."/>
            <person name="Sucgang R."/>
            <person name="Berriman M."/>
            <person name="Song J."/>
            <person name="Olsen R."/>
            <person name="Szafranski K."/>
            <person name="Xu Q."/>
            <person name="Tunggal B."/>
            <person name="Kummerfeld S."/>
            <person name="Madera M."/>
            <person name="Konfortov B.A."/>
            <person name="Rivero F."/>
            <person name="Bankier A.T."/>
            <person name="Lehmann R."/>
            <person name="Hamlin N."/>
            <person name="Davies R."/>
            <person name="Gaudet P."/>
            <person name="Fey P."/>
            <person name="Pilcher K."/>
            <person name="Chen G."/>
            <person name="Saunders D."/>
            <person name="Sodergren E.J."/>
            <person name="Davis P."/>
            <person name="Kerhornou A."/>
            <person name="Nie X."/>
            <person name="Hall N."/>
            <person name="Anjard C."/>
            <person name="Hemphill L."/>
            <person name="Bason N."/>
            <person name="Farbrother P."/>
            <person name="Desany B."/>
            <person name="Just E."/>
            <person name="Morio T."/>
            <person name="Rost R."/>
            <person name="Churcher C.M."/>
            <person name="Cooper J."/>
            <person name="Haydock S."/>
            <person name="van Driessche N."/>
            <person name="Cronin A."/>
            <person name="Goodhead I."/>
            <person name="Muzny D.M."/>
            <person name="Mourier T."/>
            <person name="Pain A."/>
            <person name="Lu M."/>
            <person name="Harper D."/>
            <person name="Lindsay R."/>
            <person name="Hauser H."/>
            <person name="James K.D."/>
            <person name="Quiles M."/>
            <person name="Madan Babu M."/>
            <person name="Saito T."/>
            <person name="Buchrieser C."/>
            <person name="Wardroper A."/>
            <person name="Felder M."/>
            <person name="Thangavelu M."/>
            <person name="Johnson D."/>
            <person name="Knights A."/>
            <person name="Loulseged H."/>
            <person name="Mungall K.L."/>
            <person name="Oliver K."/>
            <person name="Price C."/>
            <person name="Quail M.A."/>
            <person name="Urushihara H."/>
            <person name="Hernandez J."/>
            <person name="Rabbinowitsch E."/>
            <person name="Steffen D."/>
            <person name="Sanders M."/>
            <person name="Ma J."/>
            <person name="Kohara Y."/>
            <person name="Sharp S."/>
            <person name="Simmonds M.N."/>
            <person name="Spiegler S."/>
            <person name="Tivey A."/>
            <person name="Sugano S."/>
            <person name="White B."/>
            <person name="Walker D."/>
            <person name="Woodward J.R."/>
            <person name="Winckler T."/>
            <person name="Tanaka Y."/>
            <person name="Shaulsky G."/>
            <person name="Schleicher M."/>
            <person name="Weinstock G.M."/>
            <person name="Rosenthal A."/>
            <person name="Cox E.C."/>
            <person name="Chisholm R.L."/>
            <person name="Gibbs R.A."/>
            <person name="Loomis W.F."/>
            <person name="Platzer M."/>
            <person name="Kay R.R."/>
            <person name="Williams J.G."/>
            <person name="Dear P.H."/>
            <person name="Noegel A.A."/>
            <person name="Barrell B.G."/>
            <person name="Kuspa A."/>
        </authorList>
    </citation>
    <scope>NUCLEOTIDE SEQUENCE [LARGE SCALE GENOMIC DNA]</scope>
    <source>
        <strain>AX4</strain>
    </source>
</reference>
<dbReference type="EC" id="3.6.4.-"/>
<dbReference type="EMBL" id="AAFI02000024">
    <property type="protein sequence ID" value="EAL68015.1"/>
    <property type="molecule type" value="Genomic_DNA"/>
</dbReference>
<dbReference type="RefSeq" id="XP_641993.1">
    <property type="nucleotide sequence ID" value="XM_636901.1"/>
</dbReference>
<dbReference type="FunCoup" id="Q54XN7">
    <property type="interactions" value="62"/>
</dbReference>
<dbReference type="STRING" id="44689.Q54XN7"/>
<dbReference type="PaxDb" id="44689-DDB0206223"/>
<dbReference type="EnsemblProtists" id="EAL68015">
    <property type="protein sequence ID" value="EAL68015"/>
    <property type="gene ID" value="DDB_G0278827"/>
</dbReference>
<dbReference type="GeneID" id="8621725"/>
<dbReference type="KEGG" id="ddi:DDB_G0278827"/>
<dbReference type="dictyBase" id="DDB_G0278827"/>
<dbReference type="VEuPathDB" id="AmoebaDB:DDB_G0278827"/>
<dbReference type="eggNOG" id="KOG0949">
    <property type="taxonomic scope" value="Eukaryota"/>
</dbReference>
<dbReference type="HOGENOM" id="CLU_002305_0_0_1"/>
<dbReference type="InParanoid" id="Q54XN7"/>
<dbReference type="OMA" id="INHRPSN"/>
<dbReference type="PhylomeDB" id="Q54XN7"/>
<dbReference type="PRO" id="PR:Q54XN7"/>
<dbReference type="Proteomes" id="UP000002195">
    <property type="component" value="Chromosome 3"/>
</dbReference>
<dbReference type="GO" id="GO:0005737">
    <property type="term" value="C:cytoplasm"/>
    <property type="evidence" value="ECO:0000318"/>
    <property type="project" value="GO_Central"/>
</dbReference>
<dbReference type="GO" id="GO:0005634">
    <property type="term" value="C:nucleus"/>
    <property type="evidence" value="ECO:0007669"/>
    <property type="project" value="UniProtKB-SubCell"/>
</dbReference>
<dbReference type="GO" id="GO:0005524">
    <property type="term" value="F:ATP binding"/>
    <property type="evidence" value="ECO:0007669"/>
    <property type="project" value="UniProtKB-KW"/>
</dbReference>
<dbReference type="GO" id="GO:0004386">
    <property type="term" value="F:helicase activity"/>
    <property type="evidence" value="ECO:0007669"/>
    <property type="project" value="UniProtKB-KW"/>
</dbReference>
<dbReference type="GO" id="GO:0016787">
    <property type="term" value="F:hydrolase activity"/>
    <property type="evidence" value="ECO:0007669"/>
    <property type="project" value="UniProtKB-KW"/>
</dbReference>
<dbReference type="GO" id="GO:0003676">
    <property type="term" value="F:nucleic acid binding"/>
    <property type="evidence" value="ECO:0007669"/>
    <property type="project" value="InterPro"/>
</dbReference>
<dbReference type="CDD" id="cd18025">
    <property type="entry name" value="DEXHc_DDX60"/>
    <property type="match status" value="1"/>
</dbReference>
<dbReference type="FunFam" id="3.40.50.300:FF:001039">
    <property type="entry name" value="ATP-dependent RNA helicase DDX60"/>
    <property type="match status" value="1"/>
</dbReference>
<dbReference type="Gene3D" id="3.40.50.300">
    <property type="entry name" value="P-loop containing nucleotide triphosphate hydrolases"/>
    <property type="match status" value="2"/>
</dbReference>
<dbReference type="InterPro" id="IPR011545">
    <property type="entry name" value="DEAD/DEAH_box_helicase_dom"/>
</dbReference>
<dbReference type="InterPro" id="IPR014001">
    <property type="entry name" value="Helicase_ATP-bd"/>
</dbReference>
<dbReference type="InterPro" id="IPR001650">
    <property type="entry name" value="Helicase_C-like"/>
</dbReference>
<dbReference type="InterPro" id="IPR027417">
    <property type="entry name" value="P-loop_NTPase"/>
</dbReference>
<dbReference type="InterPro" id="IPR052431">
    <property type="entry name" value="SKI2_subfamily_helicases"/>
</dbReference>
<dbReference type="PANTHER" id="PTHR44533">
    <property type="entry name" value="DEAD/H RNA HELICASE, PUTATIVE-RELATED"/>
    <property type="match status" value="1"/>
</dbReference>
<dbReference type="PANTHER" id="PTHR44533:SF4">
    <property type="entry name" value="DEAD_H RNA HELICASE, PUTATIVE-RELATED"/>
    <property type="match status" value="1"/>
</dbReference>
<dbReference type="Pfam" id="PF00270">
    <property type="entry name" value="DEAD"/>
    <property type="match status" value="1"/>
</dbReference>
<dbReference type="Pfam" id="PF00271">
    <property type="entry name" value="Helicase_C"/>
    <property type="match status" value="1"/>
</dbReference>
<dbReference type="SMART" id="SM00487">
    <property type="entry name" value="DEXDc"/>
    <property type="match status" value="1"/>
</dbReference>
<dbReference type="SMART" id="SM00490">
    <property type="entry name" value="HELICc"/>
    <property type="match status" value="1"/>
</dbReference>
<dbReference type="SUPFAM" id="SSF52540">
    <property type="entry name" value="P-loop containing nucleoside triphosphate hydrolases"/>
    <property type="match status" value="1"/>
</dbReference>
<dbReference type="PROSITE" id="PS51192">
    <property type="entry name" value="HELICASE_ATP_BIND_1"/>
    <property type="match status" value="1"/>
</dbReference>
<dbReference type="PROSITE" id="PS51194">
    <property type="entry name" value="HELICASE_CTER"/>
    <property type="match status" value="1"/>
</dbReference>
<accession>Q54XN7</accession>
<gene>
    <name type="ORF">DDB_G0278827</name>
</gene>
<evidence type="ECO:0000250" key="1"/>
<evidence type="ECO:0000255" key="2">
    <source>
        <dbReference type="PROSITE-ProRule" id="PRU00541"/>
    </source>
</evidence>
<evidence type="ECO:0000255" key="3">
    <source>
        <dbReference type="PROSITE-ProRule" id="PRU00542"/>
    </source>
</evidence>
<evidence type="ECO:0000256" key="4">
    <source>
        <dbReference type="SAM" id="MobiDB-lite"/>
    </source>
</evidence>
<evidence type="ECO:0000305" key="5"/>
<keyword id="KW-0067">ATP-binding</keyword>
<keyword id="KW-0347">Helicase</keyword>
<keyword id="KW-0378">Hydrolase</keyword>
<keyword id="KW-0547">Nucleotide-binding</keyword>
<keyword id="KW-0539">Nucleus</keyword>
<keyword id="KW-1185">Reference proteome</keyword>
<sequence>MENIEKKLMLGDLLFPTKTFNVLSDFGADEPFLIDGDSLILYLFSTFNISSHKIKDKQLLSTDKCQSILFFHYFESFIANVLNRKTKFQIFFIDENQYFYKNNTLKLIRKICIDYYINNDKKNVLNNSNVQFTLIKSKWWEDFSSIESYLLENMFSFMLVLFPAQESFEKYYRVDIQEVFILKTMKFLDYVVEFNSISFEGSCIETIIYGKGTMFQRGYPYFCNKEFFKQIDSFYNNEFENFNSDKLSFKDQNQILFNQQQSENRDNEINLLISTMFNNDISNNLNRIYCIYLVLLESLSIRDRGFILPTCYKIDENVLNFLDNASYKNLLYLQQVSDSSSSSSNNNNNNNNNNNNNNENINLDYLDFKLFYQILIQIQIKLPKDLNELNNIFGEEIIIKSKLIWNNVKKDFGYDIGEFDNFELFSNFQDRNNNLNDIIQEMERRTKEINSIDNSIYLVENDFIRSVAPQAYEYLKPFQSENYPDAESTINTRFIDNYHFHSTRTIEPDAFSIKLKETTFKTKKHKQRAEDKSVGSFKKYADSLNDPRNILIINKLNPTKEELEKERIKKEKEDSKKSYKKQSSSSSSSSTTTTSTTTSSTIKPKSEIGKLLESRLNQDKKRYESELDDCKSIKSFLKFLNNLDLLTSLPELYLQYFDHLINFLVKQKEDLIEEKKRTILLERKQQSKTKTHIELSEYEEKEIETSLELGIKEKSQFYQMIQKYLRSFITEKSKILSTKLQIDFANRFYTISKSLIGLSDLSNFINDHWKLKLPKLDESDVGNQQLKNSIEFQLKHSPDTLIRNTGSVEDSRVRHFKPDAWQVELLDIVDKRESALICASTSSGKTFISFYCFEQILKESNDGIVVFVCPTKALVNQMYAEVLGRYDKNYQAINHRPSNHKMVGVFTRDFRLNIETCQILITVPQCLEILFLSIMNTHFIQRCRYIIFDEVHQIASSVDGAIWERLLVFNPAPFLALSATLGNLTDFHNFLKKIDPNRKVSLIHYQSRFNDLKNFFLCQTPAKDNKSFPTYTIEPLHPMATLDQKKTGLSDISPDLKLIAGEAIQMYQVLKEKLGYEKVNHLDPVKFFANIPNKQFNLEKQHIEIYQAELKQFYTNLPSMTEKQLVVKALTSPKYNDSLKFDWASEITNIVLELQKQDLLPALFFSFNRSLCSRLAQRVYNDITHRNTNPNIIEEKKQLDLVIERFQKSLGRALADLEPNDPEKMELERLKAKRASLDYLKPQFGNLLSSDIDEKVKKDPLAPALTQGIAAHHGGCDKNYLRNVEYLFRSKKIQVVFATSTLAVGVNAPAKSSVFLGDSPYLNVLTSKQCAGRAGRRGFDNYGNVIFVGLPKQKINRLLNSRLSNIIGNSVVSPSLCLSLVSRYDYSTNGSANKSNEENKVQVKENEKEREKEKEKEKEKEKEKETIADNWDDDDDKKEITVADNWDDDEEETAESTKTTPATTPTTTTTENTPATTTTTKTPTTTSLKKLSSEDILDVQILKKSTKSLLNNSFFLGNPLQVQFQFLFSIDYLYRETYLSKDCVPMDNFSGIVTHLSYLEPFNFTFVSLLKGGVFDNLPTNQKDCDYFIIHILSYLFCVQNIPSIYVRSPSILILPPLPPTVHKIIKNHNDRLLKTFSTYLYVYKKYLKSTNDFLPFSSNDLKDSQKTTTTTTTATTSTITNKWNENFEKLKPSTENFNTGDLLSGIFKVSNLKKLKNILGSNTYFSTRILPYCNVDGSPVNSYLLDFYKHSQKKPLIEDNKIKESDLWTLLKEFSLILKVIATALTRRNPDSPISLAFSGVAKRYIQKFSDNFDH</sequence>
<comment type="subcellular location">
    <subcellularLocation>
        <location evidence="1">Nucleus</location>
    </subcellularLocation>
</comment>
<comment type="similarity">
    <text evidence="5">Belongs to the helicase family. SKI2 subfamily.</text>
</comment>
<organism>
    <name type="scientific">Dictyostelium discoideum</name>
    <name type="common">Social amoeba</name>
    <dbReference type="NCBI Taxonomy" id="44689"/>
    <lineage>
        <taxon>Eukaryota</taxon>
        <taxon>Amoebozoa</taxon>
        <taxon>Evosea</taxon>
        <taxon>Eumycetozoa</taxon>
        <taxon>Dictyostelia</taxon>
        <taxon>Dictyosteliales</taxon>
        <taxon>Dictyosteliaceae</taxon>
        <taxon>Dictyostelium</taxon>
    </lineage>
</organism>
<protein>
    <recommendedName>
        <fullName>Uncharacterized helicase DDB_G0278827</fullName>
        <ecNumber>3.6.4.-</ecNumber>
    </recommendedName>
</protein>
<feature type="chain" id="PRO_0000367266" description="Uncharacterized helicase DDB_G0278827">
    <location>
        <begin position="1"/>
        <end position="1816"/>
    </location>
</feature>
<feature type="domain" description="Helicase ATP-binding" evidence="2">
    <location>
        <begin position="826"/>
        <end position="999"/>
    </location>
</feature>
<feature type="domain" description="Helicase C-terminal" evidence="3">
    <location>
        <begin position="1198"/>
        <end position="1379"/>
    </location>
</feature>
<feature type="region of interest" description="Disordered" evidence="4">
    <location>
        <begin position="338"/>
        <end position="357"/>
    </location>
</feature>
<feature type="region of interest" description="Disordered" evidence="4">
    <location>
        <begin position="562"/>
        <end position="605"/>
    </location>
</feature>
<feature type="region of interest" description="Disordered" evidence="4">
    <location>
        <begin position="1388"/>
        <end position="1487"/>
    </location>
</feature>
<feature type="short sequence motif" description="DEAH box">
    <location>
        <begin position="949"/>
        <end position="952"/>
    </location>
</feature>
<feature type="compositionally biased region" description="Low complexity" evidence="4">
    <location>
        <begin position="339"/>
        <end position="357"/>
    </location>
</feature>
<feature type="compositionally biased region" description="Basic and acidic residues" evidence="4">
    <location>
        <begin position="562"/>
        <end position="577"/>
    </location>
</feature>
<feature type="compositionally biased region" description="Low complexity" evidence="4">
    <location>
        <begin position="581"/>
        <end position="603"/>
    </location>
</feature>
<feature type="compositionally biased region" description="Basic and acidic residues" evidence="4">
    <location>
        <begin position="1395"/>
        <end position="1427"/>
    </location>
</feature>
<feature type="compositionally biased region" description="Acidic residues" evidence="4">
    <location>
        <begin position="1445"/>
        <end position="1454"/>
    </location>
</feature>
<feature type="compositionally biased region" description="Low complexity" evidence="4">
    <location>
        <begin position="1456"/>
        <end position="1487"/>
    </location>
</feature>
<feature type="binding site" evidence="2">
    <location>
        <begin position="839"/>
        <end position="846"/>
    </location>
    <ligand>
        <name>ATP</name>
        <dbReference type="ChEBI" id="CHEBI:30616"/>
    </ligand>
</feature>
<proteinExistence type="inferred from homology"/>
<name>Y8827_DICDI</name>